<feature type="chain" id="PRO_1000078207" description="Ribonuclease P protein component">
    <location>
        <begin position="1"/>
        <end position="136"/>
    </location>
</feature>
<feature type="region of interest" description="Disordered" evidence="2">
    <location>
        <begin position="39"/>
        <end position="59"/>
    </location>
</feature>
<dbReference type="EC" id="3.1.26.5" evidence="1"/>
<dbReference type="EMBL" id="CP000667">
    <property type="protein sequence ID" value="ABP57020.1"/>
    <property type="molecule type" value="Genomic_DNA"/>
</dbReference>
<dbReference type="RefSeq" id="WP_012015784.1">
    <property type="nucleotide sequence ID" value="NC_009380.1"/>
</dbReference>
<dbReference type="SMR" id="A4XDK4"/>
<dbReference type="STRING" id="369723.Strop_4592"/>
<dbReference type="KEGG" id="stp:Strop_4592"/>
<dbReference type="PATRIC" id="fig|369723.5.peg.4751"/>
<dbReference type="eggNOG" id="COG0594">
    <property type="taxonomic scope" value="Bacteria"/>
</dbReference>
<dbReference type="HOGENOM" id="CLU_117179_4_1_11"/>
<dbReference type="Proteomes" id="UP000000235">
    <property type="component" value="Chromosome"/>
</dbReference>
<dbReference type="GO" id="GO:0030677">
    <property type="term" value="C:ribonuclease P complex"/>
    <property type="evidence" value="ECO:0007669"/>
    <property type="project" value="TreeGrafter"/>
</dbReference>
<dbReference type="GO" id="GO:0042781">
    <property type="term" value="F:3'-tRNA processing endoribonuclease activity"/>
    <property type="evidence" value="ECO:0007669"/>
    <property type="project" value="TreeGrafter"/>
</dbReference>
<dbReference type="GO" id="GO:0004526">
    <property type="term" value="F:ribonuclease P activity"/>
    <property type="evidence" value="ECO:0007669"/>
    <property type="project" value="UniProtKB-UniRule"/>
</dbReference>
<dbReference type="GO" id="GO:0000049">
    <property type="term" value="F:tRNA binding"/>
    <property type="evidence" value="ECO:0007669"/>
    <property type="project" value="UniProtKB-UniRule"/>
</dbReference>
<dbReference type="GO" id="GO:0001682">
    <property type="term" value="P:tRNA 5'-leader removal"/>
    <property type="evidence" value="ECO:0007669"/>
    <property type="project" value="UniProtKB-UniRule"/>
</dbReference>
<dbReference type="Gene3D" id="3.30.230.10">
    <property type="match status" value="1"/>
</dbReference>
<dbReference type="HAMAP" id="MF_00227">
    <property type="entry name" value="RNase_P"/>
    <property type="match status" value="1"/>
</dbReference>
<dbReference type="InterPro" id="IPR020568">
    <property type="entry name" value="Ribosomal_Su5_D2-typ_SF"/>
</dbReference>
<dbReference type="InterPro" id="IPR014721">
    <property type="entry name" value="Ribsml_uS5_D2-typ_fold_subgr"/>
</dbReference>
<dbReference type="InterPro" id="IPR000100">
    <property type="entry name" value="RNase_P"/>
</dbReference>
<dbReference type="InterPro" id="IPR020539">
    <property type="entry name" value="RNase_P_CS"/>
</dbReference>
<dbReference type="NCBIfam" id="TIGR00188">
    <property type="entry name" value="rnpA"/>
    <property type="match status" value="1"/>
</dbReference>
<dbReference type="PANTHER" id="PTHR33992">
    <property type="entry name" value="RIBONUCLEASE P PROTEIN COMPONENT"/>
    <property type="match status" value="1"/>
</dbReference>
<dbReference type="PANTHER" id="PTHR33992:SF1">
    <property type="entry name" value="RIBONUCLEASE P PROTEIN COMPONENT"/>
    <property type="match status" value="1"/>
</dbReference>
<dbReference type="Pfam" id="PF00825">
    <property type="entry name" value="Ribonuclease_P"/>
    <property type="match status" value="1"/>
</dbReference>
<dbReference type="SUPFAM" id="SSF54211">
    <property type="entry name" value="Ribosomal protein S5 domain 2-like"/>
    <property type="match status" value="1"/>
</dbReference>
<dbReference type="PROSITE" id="PS00648">
    <property type="entry name" value="RIBONUCLEASE_P"/>
    <property type="match status" value="1"/>
</dbReference>
<organism>
    <name type="scientific">Salinispora tropica (strain ATCC BAA-916 / DSM 44818 / JCM 13857 / NBRC 105044 / CNB-440)</name>
    <dbReference type="NCBI Taxonomy" id="369723"/>
    <lineage>
        <taxon>Bacteria</taxon>
        <taxon>Bacillati</taxon>
        <taxon>Actinomycetota</taxon>
        <taxon>Actinomycetes</taxon>
        <taxon>Micromonosporales</taxon>
        <taxon>Micromonosporaceae</taxon>
        <taxon>Salinispora</taxon>
    </lineage>
</organism>
<gene>
    <name evidence="1" type="primary">rnpA</name>
    <name type="ordered locus">Strop_4592</name>
</gene>
<proteinExistence type="inferred from homology"/>
<evidence type="ECO:0000255" key="1">
    <source>
        <dbReference type="HAMAP-Rule" id="MF_00227"/>
    </source>
</evidence>
<evidence type="ECO:0000256" key="2">
    <source>
        <dbReference type="SAM" id="MobiDB-lite"/>
    </source>
</evidence>
<keyword id="KW-0255">Endonuclease</keyword>
<keyword id="KW-0378">Hydrolase</keyword>
<keyword id="KW-0540">Nuclease</keyword>
<keyword id="KW-1185">Reference proteome</keyword>
<keyword id="KW-0694">RNA-binding</keyword>
<keyword id="KW-0819">tRNA processing</keyword>
<protein>
    <recommendedName>
        <fullName evidence="1">Ribonuclease P protein component</fullName>
        <shortName evidence="1">RNase P protein</shortName>
        <shortName evidence="1">RNaseP protein</shortName>
        <ecNumber evidence="1">3.1.26.5</ecNumber>
    </recommendedName>
    <alternativeName>
        <fullName evidence="1">Protein C5</fullName>
    </alternativeName>
</protein>
<accession>A4XDK4</accession>
<name>RNPA_SALTO</name>
<sequence>MLTAAQRLRRSTDFAAAVRGGRRVGRGVVVVHLTLPGTLPDVSSSKPARDTGAEQTSAPARAGFVVSKAVGNAVVRNAVRRRLRHLVRERLPGLPAGSTLVVRALPTAAHRSYQRLGVDLDAAIAAARAPRGRRSR</sequence>
<comment type="function">
    <text evidence="1">RNaseP catalyzes the removal of the 5'-leader sequence from pre-tRNA to produce the mature 5'-terminus. It can also cleave other RNA substrates such as 4.5S RNA. The protein component plays an auxiliary but essential role in vivo by binding to the 5'-leader sequence and broadening the substrate specificity of the ribozyme.</text>
</comment>
<comment type="catalytic activity">
    <reaction evidence="1">
        <text>Endonucleolytic cleavage of RNA, removing 5'-extranucleotides from tRNA precursor.</text>
        <dbReference type="EC" id="3.1.26.5"/>
    </reaction>
</comment>
<comment type="subunit">
    <text evidence="1">Consists of a catalytic RNA component (M1 or rnpB) and a protein subunit.</text>
</comment>
<comment type="similarity">
    <text evidence="1">Belongs to the RnpA family.</text>
</comment>
<reference key="1">
    <citation type="journal article" date="2007" name="Proc. Natl. Acad. Sci. U.S.A.">
        <title>Genome sequencing reveals complex secondary metabolome in the marine actinomycete Salinispora tropica.</title>
        <authorList>
            <person name="Udwary D.W."/>
            <person name="Zeigler L."/>
            <person name="Asolkar R.N."/>
            <person name="Singan V."/>
            <person name="Lapidus A."/>
            <person name="Fenical W."/>
            <person name="Jensen P.R."/>
            <person name="Moore B.S."/>
        </authorList>
    </citation>
    <scope>NUCLEOTIDE SEQUENCE [LARGE SCALE GENOMIC DNA]</scope>
    <source>
        <strain>ATCC BAA-916 / DSM 44818 / JCM 13857 / NBRC 105044 / CNB-440</strain>
    </source>
</reference>